<keyword id="KW-0028">Amino-acid biosynthesis</keyword>
<keyword id="KW-0032">Aminotransferase</keyword>
<keyword id="KW-0368">Histidine biosynthesis</keyword>
<keyword id="KW-0663">Pyridoxal phosphate</keyword>
<keyword id="KW-1185">Reference proteome</keyword>
<keyword id="KW-0808">Transferase</keyword>
<dbReference type="EC" id="2.6.1.9" evidence="1"/>
<dbReference type="EMBL" id="CP000127">
    <property type="protein sequence ID" value="ABA59224.1"/>
    <property type="molecule type" value="Genomic_DNA"/>
</dbReference>
<dbReference type="SMR" id="Q3J7H2"/>
<dbReference type="FunCoup" id="Q3J7H2">
    <property type="interactions" value="484"/>
</dbReference>
<dbReference type="STRING" id="323261.Noc_2777"/>
<dbReference type="KEGG" id="noc:Noc_2777"/>
<dbReference type="eggNOG" id="COG0079">
    <property type="taxonomic scope" value="Bacteria"/>
</dbReference>
<dbReference type="HOGENOM" id="CLU_017584_3_1_6"/>
<dbReference type="InParanoid" id="Q3J7H2"/>
<dbReference type="UniPathway" id="UPA00031">
    <property type="reaction ID" value="UER00012"/>
</dbReference>
<dbReference type="Proteomes" id="UP000006838">
    <property type="component" value="Chromosome"/>
</dbReference>
<dbReference type="GO" id="GO:0004400">
    <property type="term" value="F:histidinol-phosphate transaminase activity"/>
    <property type="evidence" value="ECO:0007669"/>
    <property type="project" value="UniProtKB-UniRule"/>
</dbReference>
<dbReference type="GO" id="GO:0030170">
    <property type="term" value="F:pyridoxal phosphate binding"/>
    <property type="evidence" value="ECO:0007669"/>
    <property type="project" value="InterPro"/>
</dbReference>
<dbReference type="GO" id="GO:0000105">
    <property type="term" value="P:L-histidine biosynthetic process"/>
    <property type="evidence" value="ECO:0007669"/>
    <property type="project" value="UniProtKB-UniRule"/>
</dbReference>
<dbReference type="CDD" id="cd00609">
    <property type="entry name" value="AAT_like"/>
    <property type="match status" value="1"/>
</dbReference>
<dbReference type="Gene3D" id="3.90.1150.10">
    <property type="entry name" value="Aspartate Aminotransferase, domain 1"/>
    <property type="match status" value="1"/>
</dbReference>
<dbReference type="Gene3D" id="3.40.640.10">
    <property type="entry name" value="Type I PLP-dependent aspartate aminotransferase-like (Major domain)"/>
    <property type="match status" value="1"/>
</dbReference>
<dbReference type="HAMAP" id="MF_01023">
    <property type="entry name" value="HisC_aminotrans_2"/>
    <property type="match status" value="1"/>
</dbReference>
<dbReference type="InterPro" id="IPR004839">
    <property type="entry name" value="Aminotransferase_I/II_large"/>
</dbReference>
<dbReference type="InterPro" id="IPR005861">
    <property type="entry name" value="HisP_aminotrans"/>
</dbReference>
<dbReference type="InterPro" id="IPR015424">
    <property type="entry name" value="PyrdxlP-dep_Trfase"/>
</dbReference>
<dbReference type="InterPro" id="IPR015421">
    <property type="entry name" value="PyrdxlP-dep_Trfase_major"/>
</dbReference>
<dbReference type="InterPro" id="IPR015422">
    <property type="entry name" value="PyrdxlP-dep_Trfase_small"/>
</dbReference>
<dbReference type="NCBIfam" id="TIGR01141">
    <property type="entry name" value="hisC"/>
    <property type="match status" value="1"/>
</dbReference>
<dbReference type="PANTHER" id="PTHR42885:SF2">
    <property type="entry name" value="HISTIDINOL-PHOSPHATE AMINOTRANSFERASE"/>
    <property type="match status" value="1"/>
</dbReference>
<dbReference type="PANTHER" id="PTHR42885">
    <property type="entry name" value="HISTIDINOL-PHOSPHATE AMINOTRANSFERASE-RELATED"/>
    <property type="match status" value="1"/>
</dbReference>
<dbReference type="Pfam" id="PF00155">
    <property type="entry name" value="Aminotran_1_2"/>
    <property type="match status" value="1"/>
</dbReference>
<dbReference type="SUPFAM" id="SSF53383">
    <property type="entry name" value="PLP-dependent transferases"/>
    <property type="match status" value="1"/>
</dbReference>
<feature type="chain" id="PRO_0000153403" description="Histidinol-phosphate aminotransferase 2">
    <location>
        <begin position="1"/>
        <end position="360"/>
    </location>
</feature>
<feature type="modified residue" description="N6-(pyridoxal phosphate)lysine" evidence="1">
    <location>
        <position position="218"/>
    </location>
</feature>
<sequence>MTKDRVAQWIRPEIQRLSAYRVADAADLIKLDAMENPYTWSPELIEAWLERLRQVSVNRYPDPQARSLKLRLRQYLALPEDMEMILGNGSDELIQMVLLAVAGPGRSVVAPEPTFVMYRQIAALLGLQYQGVALREDFSLDLPAMLQVIRERVPAVVFIAYPNNPTGNLFSAEELQAIIEASPGLVIVDEAYSVFAGETFMPRLEDYDHLLVMRTLSKIGLAGLRLGMLMGNPAWIKELEKVRLPYNINQLTQVSAEFALEQPGGLDEQARLICKARAQLQRALQQLPGIQVYPSDANFILFRTPPHQAEAIFTAIKERGVLIKNLSGQGGLLTDCLRVTVGTADENHAFLKALKAGRKN</sequence>
<proteinExistence type="inferred from homology"/>
<name>HIS82_NITOC</name>
<protein>
    <recommendedName>
        <fullName evidence="1">Histidinol-phosphate aminotransferase 2</fullName>
        <ecNumber evidence="1">2.6.1.9</ecNumber>
    </recommendedName>
    <alternativeName>
        <fullName evidence="1">Imidazole acetol-phosphate transaminase 2</fullName>
    </alternativeName>
</protein>
<accession>Q3J7H2</accession>
<evidence type="ECO:0000255" key="1">
    <source>
        <dbReference type="HAMAP-Rule" id="MF_01023"/>
    </source>
</evidence>
<organism>
    <name type="scientific">Nitrosococcus oceani (strain ATCC 19707 / BCRC 17464 / JCM 30415 / NCIMB 11848 / C-107)</name>
    <dbReference type="NCBI Taxonomy" id="323261"/>
    <lineage>
        <taxon>Bacteria</taxon>
        <taxon>Pseudomonadati</taxon>
        <taxon>Pseudomonadota</taxon>
        <taxon>Gammaproteobacteria</taxon>
        <taxon>Chromatiales</taxon>
        <taxon>Chromatiaceae</taxon>
        <taxon>Nitrosococcus</taxon>
    </lineage>
</organism>
<comment type="catalytic activity">
    <reaction evidence="1">
        <text>L-histidinol phosphate + 2-oxoglutarate = 3-(imidazol-4-yl)-2-oxopropyl phosphate + L-glutamate</text>
        <dbReference type="Rhea" id="RHEA:23744"/>
        <dbReference type="ChEBI" id="CHEBI:16810"/>
        <dbReference type="ChEBI" id="CHEBI:29985"/>
        <dbReference type="ChEBI" id="CHEBI:57766"/>
        <dbReference type="ChEBI" id="CHEBI:57980"/>
        <dbReference type="EC" id="2.6.1.9"/>
    </reaction>
</comment>
<comment type="cofactor">
    <cofactor evidence="1">
        <name>pyridoxal 5'-phosphate</name>
        <dbReference type="ChEBI" id="CHEBI:597326"/>
    </cofactor>
</comment>
<comment type="pathway">
    <text evidence="1">Amino-acid biosynthesis; L-histidine biosynthesis; L-histidine from 5-phospho-alpha-D-ribose 1-diphosphate: step 7/9.</text>
</comment>
<comment type="subunit">
    <text evidence="1">Homodimer.</text>
</comment>
<comment type="similarity">
    <text evidence="1">Belongs to the class-II pyridoxal-phosphate-dependent aminotransferase family. Histidinol-phosphate aminotransferase subfamily.</text>
</comment>
<gene>
    <name evidence="1" type="primary">hisC2</name>
    <name type="ordered locus">Noc_2777</name>
</gene>
<reference key="1">
    <citation type="journal article" date="2006" name="Appl. Environ. Microbiol.">
        <title>Complete genome sequence of the marine, chemolithoautotrophic, ammonia-oxidizing bacterium Nitrosococcus oceani ATCC 19707.</title>
        <authorList>
            <person name="Klotz M.G."/>
            <person name="Arp D.J."/>
            <person name="Chain P.S.G."/>
            <person name="El-Sheikh A.F."/>
            <person name="Hauser L.J."/>
            <person name="Hommes N.G."/>
            <person name="Larimer F.W."/>
            <person name="Malfatti S.A."/>
            <person name="Norton J.M."/>
            <person name="Poret-Peterson A.T."/>
            <person name="Vergez L.M."/>
            <person name="Ward B.B."/>
        </authorList>
    </citation>
    <scope>NUCLEOTIDE SEQUENCE [LARGE SCALE GENOMIC DNA]</scope>
    <source>
        <strain>ATCC 19707 / BCRC 17464 / JCM 30415 / NCIMB 11848 / C-107</strain>
    </source>
</reference>